<accession>Q9ZHF6</accession>
<evidence type="ECO:0000255" key="1">
    <source>
        <dbReference type="HAMAP-Rule" id="MF_00356"/>
    </source>
</evidence>
<evidence type="ECO:0007829" key="2">
    <source>
        <dbReference type="PDB" id="2P1J"/>
    </source>
</evidence>
<gene>
    <name evidence="1" type="primary">polC</name>
    <name type="ordered locus">TM_0576</name>
</gene>
<dbReference type="EC" id="2.7.7.7" evidence="1"/>
<dbReference type="EMBL" id="AF065313">
    <property type="protein sequence ID" value="AAC80438.1"/>
    <property type="molecule type" value="Genomic_DNA"/>
</dbReference>
<dbReference type="EMBL" id="AE000512">
    <property type="protein sequence ID" value="AAD35661.1"/>
    <property type="molecule type" value="Genomic_DNA"/>
</dbReference>
<dbReference type="PIR" id="C72360">
    <property type="entry name" value="C72360"/>
</dbReference>
<dbReference type="RefSeq" id="NP_228386.1">
    <property type="nucleotide sequence ID" value="NC_000853.1"/>
</dbReference>
<dbReference type="RefSeq" id="WP_004081285.1">
    <property type="nucleotide sequence ID" value="NC_000853.1"/>
</dbReference>
<dbReference type="PDB" id="2P1J">
    <property type="method" value="X-ray"/>
    <property type="resolution" value="2.50 A"/>
    <property type="chains" value="A/B=347-522"/>
</dbReference>
<dbReference type="PDBsum" id="2P1J"/>
<dbReference type="SMR" id="Q9ZHF6"/>
<dbReference type="FunCoup" id="Q9ZHF6">
    <property type="interactions" value="44"/>
</dbReference>
<dbReference type="STRING" id="243274.TM_0576"/>
<dbReference type="PaxDb" id="243274-THEMA_01790"/>
<dbReference type="EnsemblBacteria" id="AAD35661">
    <property type="protein sequence ID" value="AAD35661"/>
    <property type="gene ID" value="TM_0576"/>
</dbReference>
<dbReference type="KEGG" id="tma:TM0576"/>
<dbReference type="KEGG" id="tmi:THEMA_01790"/>
<dbReference type="KEGG" id="tmm:Tmari_0574"/>
<dbReference type="KEGG" id="tmw:THMA_0590"/>
<dbReference type="eggNOG" id="COG2176">
    <property type="taxonomic scope" value="Bacteria"/>
</dbReference>
<dbReference type="InParanoid" id="Q9ZHF6"/>
<dbReference type="OrthoDB" id="9804290at2"/>
<dbReference type="EvolutionaryTrace" id="Q9ZHF6"/>
<dbReference type="Proteomes" id="UP000008183">
    <property type="component" value="Chromosome"/>
</dbReference>
<dbReference type="GO" id="GO:0005737">
    <property type="term" value="C:cytoplasm"/>
    <property type="evidence" value="ECO:0007669"/>
    <property type="project" value="UniProtKB-SubCell"/>
</dbReference>
<dbReference type="GO" id="GO:0008408">
    <property type="term" value="F:3'-5' exonuclease activity"/>
    <property type="evidence" value="ECO:0007669"/>
    <property type="project" value="UniProtKB-UniRule"/>
</dbReference>
<dbReference type="GO" id="GO:0003677">
    <property type="term" value="F:DNA binding"/>
    <property type="evidence" value="ECO:0007669"/>
    <property type="project" value="UniProtKB-UniRule"/>
</dbReference>
<dbReference type="GO" id="GO:0003887">
    <property type="term" value="F:DNA-directed DNA polymerase activity"/>
    <property type="evidence" value="ECO:0000318"/>
    <property type="project" value="GO_Central"/>
</dbReference>
<dbReference type="GO" id="GO:0006261">
    <property type="term" value="P:DNA-templated DNA replication"/>
    <property type="evidence" value="ECO:0007669"/>
    <property type="project" value="UniProtKB-UniRule"/>
</dbReference>
<dbReference type="CDD" id="cd06127">
    <property type="entry name" value="DEDDh"/>
    <property type="match status" value="1"/>
</dbReference>
<dbReference type="CDD" id="cd07435">
    <property type="entry name" value="PHP_PolIIIA_POLC"/>
    <property type="match status" value="1"/>
</dbReference>
<dbReference type="CDD" id="cd04484">
    <property type="entry name" value="polC_OBF"/>
    <property type="match status" value="1"/>
</dbReference>
<dbReference type="FunFam" id="3.30.420.10:FF:000045">
    <property type="entry name" value="3'-5' exonuclease DinG"/>
    <property type="match status" value="1"/>
</dbReference>
<dbReference type="Gene3D" id="1.10.150.870">
    <property type="match status" value="1"/>
</dbReference>
<dbReference type="Gene3D" id="3.30.1900.20">
    <property type="match status" value="2"/>
</dbReference>
<dbReference type="Gene3D" id="3.20.20.140">
    <property type="entry name" value="Metal-dependent hydrolases"/>
    <property type="match status" value="2"/>
</dbReference>
<dbReference type="Gene3D" id="2.40.50.140">
    <property type="entry name" value="Nucleic acid-binding proteins"/>
    <property type="match status" value="1"/>
</dbReference>
<dbReference type="Gene3D" id="1.10.150.700">
    <property type="entry name" value="PolC, middle finger domain"/>
    <property type="match status" value="2"/>
</dbReference>
<dbReference type="Gene3D" id="3.30.420.10">
    <property type="entry name" value="Ribonuclease H-like superfamily/Ribonuclease H"/>
    <property type="match status" value="1"/>
</dbReference>
<dbReference type="HAMAP" id="MF_00356">
    <property type="entry name" value="DNApol_PolC"/>
    <property type="match status" value="1"/>
</dbReference>
<dbReference type="InterPro" id="IPR011708">
    <property type="entry name" value="DNA_pol3_alpha_NTPase_dom"/>
</dbReference>
<dbReference type="InterPro" id="IPR040982">
    <property type="entry name" value="DNA_pol3_finger"/>
</dbReference>
<dbReference type="InterPro" id="IPR004805">
    <property type="entry name" value="DnaE2/DnaE/PolC"/>
</dbReference>
<dbReference type="InterPro" id="IPR029460">
    <property type="entry name" value="DNAPol_HHH"/>
</dbReference>
<dbReference type="InterPro" id="IPR006054">
    <property type="entry name" value="DnaQ"/>
</dbReference>
<dbReference type="InterPro" id="IPR013520">
    <property type="entry name" value="Exonuclease_RNaseT/DNA_pol3"/>
</dbReference>
<dbReference type="InterPro" id="IPR012340">
    <property type="entry name" value="NA-bd_OB-fold"/>
</dbReference>
<dbReference type="InterPro" id="IPR004365">
    <property type="entry name" value="NA-bd_OB_tRNA"/>
</dbReference>
<dbReference type="InterPro" id="IPR004013">
    <property type="entry name" value="PHP_dom"/>
</dbReference>
<dbReference type="InterPro" id="IPR003141">
    <property type="entry name" value="Pol/His_phosphatase_N"/>
</dbReference>
<dbReference type="InterPro" id="IPR006308">
    <property type="entry name" value="Pol_III_a_PolC-type_gram_pos"/>
</dbReference>
<dbReference type="InterPro" id="IPR044923">
    <property type="entry name" value="PolC_middle_finger_sf"/>
</dbReference>
<dbReference type="InterPro" id="IPR012337">
    <property type="entry name" value="RNaseH-like_sf"/>
</dbReference>
<dbReference type="InterPro" id="IPR036397">
    <property type="entry name" value="RNaseH_sf"/>
</dbReference>
<dbReference type="NCBIfam" id="TIGR00573">
    <property type="entry name" value="dnaq"/>
    <property type="match status" value="1"/>
</dbReference>
<dbReference type="NCBIfam" id="TIGR01405">
    <property type="entry name" value="polC_Gram_pos"/>
    <property type="match status" value="1"/>
</dbReference>
<dbReference type="NCBIfam" id="NF001688">
    <property type="entry name" value="PRK00448.1"/>
    <property type="match status" value="1"/>
</dbReference>
<dbReference type="PANTHER" id="PTHR32294:SF5">
    <property type="entry name" value="DNA POLYMERASE III POLC-TYPE"/>
    <property type="match status" value="1"/>
</dbReference>
<dbReference type="PANTHER" id="PTHR32294">
    <property type="entry name" value="DNA POLYMERASE III SUBUNIT ALPHA"/>
    <property type="match status" value="1"/>
</dbReference>
<dbReference type="Pfam" id="PF07733">
    <property type="entry name" value="DNA_pol3_alpha"/>
    <property type="match status" value="1"/>
</dbReference>
<dbReference type="Pfam" id="PF17657">
    <property type="entry name" value="DNA_pol3_finger"/>
    <property type="match status" value="1"/>
</dbReference>
<dbReference type="Pfam" id="PF14579">
    <property type="entry name" value="HHH_6"/>
    <property type="match status" value="1"/>
</dbReference>
<dbReference type="Pfam" id="PF02811">
    <property type="entry name" value="PHP"/>
    <property type="match status" value="1"/>
</dbReference>
<dbReference type="Pfam" id="PF00929">
    <property type="entry name" value="RNase_T"/>
    <property type="match status" value="1"/>
</dbReference>
<dbReference type="Pfam" id="PF01336">
    <property type="entry name" value="tRNA_anti-codon"/>
    <property type="match status" value="1"/>
</dbReference>
<dbReference type="SMART" id="SM00479">
    <property type="entry name" value="EXOIII"/>
    <property type="match status" value="1"/>
</dbReference>
<dbReference type="SMART" id="SM00481">
    <property type="entry name" value="POLIIIAc"/>
    <property type="match status" value="1"/>
</dbReference>
<dbReference type="SUPFAM" id="SSF160975">
    <property type="entry name" value="AF1531-like"/>
    <property type="match status" value="1"/>
</dbReference>
<dbReference type="SUPFAM" id="SSF53098">
    <property type="entry name" value="Ribonuclease H-like"/>
    <property type="match status" value="1"/>
</dbReference>
<proteinExistence type="evidence at protein level"/>
<organism>
    <name type="scientific">Thermotoga maritima (strain ATCC 43589 / DSM 3109 / JCM 10099 / NBRC 100826 / MSB8)</name>
    <dbReference type="NCBI Taxonomy" id="243274"/>
    <lineage>
        <taxon>Bacteria</taxon>
        <taxon>Thermotogati</taxon>
        <taxon>Thermotogota</taxon>
        <taxon>Thermotogae</taxon>
        <taxon>Thermotogales</taxon>
        <taxon>Thermotogaceae</taxon>
        <taxon>Thermotoga</taxon>
    </lineage>
</organism>
<protein>
    <recommendedName>
        <fullName evidence="1">DNA polymerase III PolC-type</fullName>
        <shortName evidence="1">PolIII</shortName>
        <ecNumber evidence="1">2.7.7.7</ecNumber>
    </recommendedName>
</protein>
<sequence>MKKIENLKWKNVSFKSLEIDPDAGVVLVSVEKFSEEIEDLVRLLEKKTRFRVIVNGVQKSNGDLRGKILSLLNGNVPYIKDVVFEGNRLILKVLGDFARDRIASKLRSTKKQLDELLPPGTEIMLEVVEPPEDLLKKEVPQPEKREEPKGEELKIEDENHIFGQKPRKIVFTPSKIFEYNKKTSVKGKIFKIEKIEGKRTVLLIYLTDGEDSLICKVFNDVEKVEGKVSVGDVIVATGDLLLENGEPTLYVKGITKLPEAKRMDKSPVKRVELHAHTKFSDQDAITDVNEYVKRAKEWGFPAIALTDHGNVQAIPYFYDAAKEAGIKPIFGIEAYLVSDVEPVIRNLSDDSTFGDATFVVLDFETTGLDPQVDEIIEIGAVKIQGGQIVDEYHTLIKPSREISRKSSEITGITQEMLENKRSIEEVLPEFLGFLEDSIIVAHNANFDYRFLRLWIKKVMGLDWERPYIDTLALAKSLLKLRSYSLDSVVEKLGLGPFRHHRALDDARVTAQVFLRFVEMMKKIGITKLSEMEKLKDTIDYTALKPFHCTILVQNKKGLKNLYKLVSDSYIKYFYGVPRILKSELIENREGLLVGSACISGELGRAALEGASDSELEEIAKFYDYIEVMPLDVIAEDEEDLDRERLKEVYRKLYRIAKKLNKFVVMTGDVHFLDPEDARGRAALLAPQGNRNFENQPALYLRTTEEMLEKAIEIFEDEEIAREVVIENPNRIADMIEEVQPLEKKLHPPIIENADEIVRNLTMKRAYEIYGDPLPEIVQKRVEKELNAIINHGYAVLYLIAQELVQKSMSDGYVVGSRGSVGSSLVANLLGITEVNPLPPHYRCPECKYFEVVEDDRYGAGYDLPNKNCPRCGAPLRKDGHGIPFETFMGFEGDKVPDIDLNFSGEYQERAHRFVEELFGKDHVYRAGTINTIAERSAVGYVRSYEEKTGKKLRKAEMERLVSMITGVKRTTGQHPGGLMIIPKDKEVYDFTPIQYPANDRNAGVFTTHFAYETIHDDLVKIDALGHDDPTFIKMLKDLTGIDPMTIPMDDPDTLAIFSSVKPLGVDPVELESDVGTYGIPEFGTEFVRGMLVETRPKSFAELVRISGLSHGTDVWLNNARDWINLGYAKLSEVISCRDDIMNFLIHKGMEPSLAFKIMENVRKGKGITEEMESEMRRLKVPEWFIESCKRIKYLFPKAHAVAYVSMAFRIAYFKVHYPLQFYAAYFTIKGDQFDPVLVLRGKEAIKRRLRELKAMPAKDAQKKNEVSVLEVALEMILRGFSFLPPDIFKSDAKKFLIEGNSLRIPFNKLPGLGDSVAESIIRAREEKPFTSVEDLMKRTKVNKNHIELMKSLGVLGDLPETEQFTLF</sequence>
<reference key="1">
    <citation type="journal article" date="1998" name="Nucleic Acids Res.">
        <title>The hyperthermophilic bacterium Thermotoga maritima has two different classes of family C DNA polymerases: evolutionary implications.</title>
        <authorList>
            <person name="Huang Y.P."/>
            <person name="Ito J."/>
        </authorList>
    </citation>
    <scope>NUCLEOTIDE SEQUENCE [GENOMIC DNA]</scope>
</reference>
<reference key="2">
    <citation type="journal article" date="1999" name="Nature">
        <title>Evidence for lateral gene transfer between Archaea and Bacteria from genome sequence of Thermotoga maritima.</title>
        <authorList>
            <person name="Nelson K.E."/>
            <person name="Clayton R.A."/>
            <person name="Gill S.R."/>
            <person name="Gwinn M.L."/>
            <person name="Dodson R.J."/>
            <person name="Haft D.H."/>
            <person name="Hickey E.K."/>
            <person name="Peterson J.D."/>
            <person name="Nelson W.C."/>
            <person name="Ketchum K.A."/>
            <person name="McDonald L.A."/>
            <person name="Utterback T.R."/>
            <person name="Malek J.A."/>
            <person name="Linher K.D."/>
            <person name="Garrett M.M."/>
            <person name="Stewart A.M."/>
            <person name="Cotton M.D."/>
            <person name="Pratt M.S."/>
            <person name="Phillips C.A."/>
            <person name="Richardson D.L."/>
            <person name="Heidelberg J.F."/>
            <person name="Sutton G.G."/>
            <person name="Fleischmann R.D."/>
            <person name="Eisen J.A."/>
            <person name="White O."/>
            <person name="Salzberg S.L."/>
            <person name="Smith H.O."/>
            <person name="Venter J.C."/>
            <person name="Fraser C.M."/>
        </authorList>
    </citation>
    <scope>NUCLEOTIDE SEQUENCE [LARGE SCALE GENOMIC DNA]</scope>
    <source>
        <strain>ATCC 43589 / DSM 3109 / JCM 10099 / NBRC 100826 / MSB8</strain>
    </source>
</reference>
<name>DPO3_THEMA</name>
<feature type="chain" id="PRO_0000204605" description="DNA polymerase III PolC-type">
    <location>
        <begin position="1"/>
        <end position="1367"/>
    </location>
</feature>
<feature type="domain" description="Exonuclease">
    <location>
        <begin position="358"/>
        <end position="513"/>
    </location>
</feature>
<feature type="strand" evidence="2">
    <location>
        <begin position="358"/>
        <end position="366"/>
    </location>
</feature>
<feature type="turn" evidence="2">
    <location>
        <begin position="370"/>
        <end position="372"/>
    </location>
</feature>
<feature type="strand" evidence="2">
    <location>
        <begin position="375"/>
        <end position="384"/>
    </location>
</feature>
<feature type="strand" evidence="2">
    <location>
        <begin position="387"/>
        <end position="395"/>
    </location>
</feature>
<feature type="helix" evidence="2">
    <location>
        <begin position="404"/>
        <end position="410"/>
    </location>
</feature>
<feature type="helix" evidence="2">
    <location>
        <begin position="414"/>
        <end position="417"/>
    </location>
</feature>
<feature type="helix" evidence="2">
    <location>
        <begin position="423"/>
        <end position="433"/>
    </location>
</feature>
<feature type="strand" evidence="2">
    <location>
        <begin position="434"/>
        <end position="436"/>
    </location>
</feature>
<feature type="strand" evidence="2">
    <location>
        <begin position="438"/>
        <end position="441"/>
    </location>
</feature>
<feature type="helix" evidence="2">
    <location>
        <begin position="444"/>
        <end position="459"/>
    </location>
</feature>
<feature type="strand" evidence="2">
    <location>
        <begin position="467"/>
        <end position="469"/>
    </location>
</feature>
<feature type="helix" evidence="2">
    <location>
        <begin position="470"/>
        <end position="477"/>
    </location>
</feature>
<feature type="helix" evidence="2">
    <location>
        <begin position="485"/>
        <end position="491"/>
    </location>
</feature>
<feature type="helix" evidence="2">
    <location>
        <begin position="501"/>
        <end position="516"/>
    </location>
</feature>
<comment type="function">
    <text>Required for replicative DNA synthesis. This DNA polymerase also exhibits 3' to 5' exonuclease activity.</text>
</comment>
<comment type="catalytic activity">
    <reaction evidence="1">
        <text>DNA(n) + a 2'-deoxyribonucleoside 5'-triphosphate = DNA(n+1) + diphosphate</text>
        <dbReference type="Rhea" id="RHEA:22508"/>
        <dbReference type="Rhea" id="RHEA-COMP:17339"/>
        <dbReference type="Rhea" id="RHEA-COMP:17340"/>
        <dbReference type="ChEBI" id="CHEBI:33019"/>
        <dbReference type="ChEBI" id="CHEBI:61560"/>
        <dbReference type="ChEBI" id="CHEBI:173112"/>
        <dbReference type="EC" id="2.7.7.7"/>
    </reaction>
</comment>
<comment type="subcellular location">
    <subcellularLocation>
        <location evidence="1">Cytoplasm</location>
    </subcellularLocation>
</comment>
<comment type="similarity">
    <text evidence="1">Belongs to the DNA polymerase type-C family. PolC subfamily.</text>
</comment>
<keyword id="KW-0002">3D-structure</keyword>
<keyword id="KW-0963">Cytoplasm</keyword>
<keyword id="KW-0235">DNA replication</keyword>
<keyword id="KW-0239">DNA-directed DNA polymerase</keyword>
<keyword id="KW-0269">Exonuclease</keyword>
<keyword id="KW-0378">Hydrolase</keyword>
<keyword id="KW-0540">Nuclease</keyword>
<keyword id="KW-0548">Nucleotidyltransferase</keyword>
<keyword id="KW-1185">Reference proteome</keyword>
<keyword id="KW-0808">Transferase</keyword>